<protein>
    <recommendedName>
        <fullName evidence="2">Translation initiation factor IF-2</fullName>
    </recommendedName>
</protein>
<organism>
    <name type="scientific">Shewanella putrefaciens (strain CN-32 / ATCC BAA-453)</name>
    <dbReference type="NCBI Taxonomy" id="319224"/>
    <lineage>
        <taxon>Bacteria</taxon>
        <taxon>Pseudomonadati</taxon>
        <taxon>Pseudomonadota</taxon>
        <taxon>Gammaproteobacteria</taxon>
        <taxon>Alteromonadales</taxon>
        <taxon>Shewanellaceae</taxon>
        <taxon>Shewanella</taxon>
    </lineage>
</organism>
<name>IF2_SHEPC</name>
<accession>A4Y9C0</accession>
<dbReference type="EMBL" id="CP000681">
    <property type="protein sequence ID" value="ABP76553.1"/>
    <property type="molecule type" value="Genomic_DNA"/>
</dbReference>
<dbReference type="SMR" id="A4Y9C0"/>
<dbReference type="STRING" id="319224.Sputcn32_2834"/>
<dbReference type="KEGG" id="spc:Sputcn32_2834"/>
<dbReference type="eggNOG" id="COG0532">
    <property type="taxonomic scope" value="Bacteria"/>
</dbReference>
<dbReference type="HOGENOM" id="CLU_006301_6_3_6"/>
<dbReference type="GO" id="GO:0005829">
    <property type="term" value="C:cytosol"/>
    <property type="evidence" value="ECO:0007669"/>
    <property type="project" value="TreeGrafter"/>
</dbReference>
<dbReference type="GO" id="GO:0005525">
    <property type="term" value="F:GTP binding"/>
    <property type="evidence" value="ECO:0007669"/>
    <property type="project" value="UniProtKB-KW"/>
</dbReference>
<dbReference type="GO" id="GO:0003924">
    <property type="term" value="F:GTPase activity"/>
    <property type="evidence" value="ECO:0007669"/>
    <property type="project" value="UniProtKB-UniRule"/>
</dbReference>
<dbReference type="GO" id="GO:0097216">
    <property type="term" value="F:guanosine tetraphosphate binding"/>
    <property type="evidence" value="ECO:0007669"/>
    <property type="project" value="UniProtKB-ARBA"/>
</dbReference>
<dbReference type="GO" id="GO:0003743">
    <property type="term" value="F:translation initiation factor activity"/>
    <property type="evidence" value="ECO:0007669"/>
    <property type="project" value="UniProtKB-UniRule"/>
</dbReference>
<dbReference type="CDD" id="cd01887">
    <property type="entry name" value="IF2_eIF5B"/>
    <property type="match status" value="1"/>
</dbReference>
<dbReference type="CDD" id="cd03702">
    <property type="entry name" value="IF2_mtIF2_II"/>
    <property type="match status" value="1"/>
</dbReference>
<dbReference type="CDD" id="cd03692">
    <property type="entry name" value="mtIF2_IVc"/>
    <property type="match status" value="1"/>
</dbReference>
<dbReference type="FunFam" id="2.40.30.10:FF:000007">
    <property type="entry name" value="Translation initiation factor IF-2"/>
    <property type="match status" value="1"/>
</dbReference>
<dbReference type="FunFam" id="2.40.30.10:FF:000008">
    <property type="entry name" value="Translation initiation factor IF-2"/>
    <property type="match status" value="1"/>
</dbReference>
<dbReference type="FunFam" id="3.40.50.10050:FF:000001">
    <property type="entry name" value="Translation initiation factor IF-2"/>
    <property type="match status" value="1"/>
</dbReference>
<dbReference type="FunFam" id="3.40.50.300:FF:000019">
    <property type="entry name" value="Translation initiation factor IF-2"/>
    <property type="match status" value="1"/>
</dbReference>
<dbReference type="Gene3D" id="3.40.50.300">
    <property type="entry name" value="P-loop containing nucleotide triphosphate hydrolases"/>
    <property type="match status" value="1"/>
</dbReference>
<dbReference type="Gene3D" id="3.30.56.50">
    <property type="entry name" value="Putative DNA-binding domain, N-terminal subdomain of bacterial translation initiation factor IF2"/>
    <property type="match status" value="1"/>
</dbReference>
<dbReference type="Gene3D" id="2.40.30.10">
    <property type="entry name" value="Translation factors"/>
    <property type="match status" value="2"/>
</dbReference>
<dbReference type="Gene3D" id="3.40.50.10050">
    <property type="entry name" value="Translation initiation factor IF- 2, domain 3"/>
    <property type="match status" value="1"/>
</dbReference>
<dbReference type="HAMAP" id="MF_00100_B">
    <property type="entry name" value="IF_2_B"/>
    <property type="match status" value="1"/>
</dbReference>
<dbReference type="InterPro" id="IPR009061">
    <property type="entry name" value="DNA-bd_dom_put_sf"/>
</dbReference>
<dbReference type="InterPro" id="IPR053905">
    <property type="entry name" value="EF-G-like_DII"/>
</dbReference>
<dbReference type="InterPro" id="IPR004161">
    <property type="entry name" value="EFTu-like_2"/>
</dbReference>
<dbReference type="InterPro" id="IPR013575">
    <property type="entry name" value="IF2_assoc_dom_bac"/>
</dbReference>
<dbReference type="InterPro" id="IPR044145">
    <property type="entry name" value="IF2_II"/>
</dbReference>
<dbReference type="InterPro" id="IPR006847">
    <property type="entry name" value="IF2_N"/>
</dbReference>
<dbReference type="InterPro" id="IPR027417">
    <property type="entry name" value="P-loop_NTPase"/>
</dbReference>
<dbReference type="InterPro" id="IPR005225">
    <property type="entry name" value="Small_GTP-bd"/>
</dbReference>
<dbReference type="InterPro" id="IPR000795">
    <property type="entry name" value="T_Tr_GTP-bd_dom"/>
</dbReference>
<dbReference type="InterPro" id="IPR000178">
    <property type="entry name" value="TF_IF2_bacterial-like"/>
</dbReference>
<dbReference type="InterPro" id="IPR015760">
    <property type="entry name" value="TIF_IF2"/>
</dbReference>
<dbReference type="InterPro" id="IPR023115">
    <property type="entry name" value="TIF_IF2_dom3"/>
</dbReference>
<dbReference type="InterPro" id="IPR036925">
    <property type="entry name" value="TIF_IF2_dom3_sf"/>
</dbReference>
<dbReference type="InterPro" id="IPR009000">
    <property type="entry name" value="Transl_B-barrel_sf"/>
</dbReference>
<dbReference type="NCBIfam" id="TIGR00487">
    <property type="entry name" value="IF-2"/>
    <property type="match status" value="1"/>
</dbReference>
<dbReference type="NCBIfam" id="TIGR00231">
    <property type="entry name" value="small_GTP"/>
    <property type="match status" value="1"/>
</dbReference>
<dbReference type="PANTHER" id="PTHR43381:SF5">
    <property type="entry name" value="TR-TYPE G DOMAIN-CONTAINING PROTEIN"/>
    <property type="match status" value="1"/>
</dbReference>
<dbReference type="PANTHER" id="PTHR43381">
    <property type="entry name" value="TRANSLATION INITIATION FACTOR IF-2-RELATED"/>
    <property type="match status" value="1"/>
</dbReference>
<dbReference type="Pfam" id="PF22042">
    <property type="entry name" value="EF-G_D2"/>
    <property type="match status" value="1"/>
</dbReference>
<dbReference type="Pfam" id="PF00009">
    <property type="entry name" value="GTP_EFTU"/>
    <property type="match status" value="1"/>
</dbReference>
<dbReference type="Pfam" id="PF03144">
    <property type="entry name" value="GTP_EFTU_D2"/>
    <property type="match status" value="1"/>
</dbReference>
<dbReference type="Pfam" id="PF11987">
    <property type="entry name" value="IF-2"/>
    <property type="match status" value="1"/>
</dbReference>
<dbReference type="Pfam" id="PF08364">
    <property type="entry name" value="IF2_assoc"/>
    <property type="match status" value="1"/>
</dbReference>
<dbReference type="Pfam" id="PF04760">
    <property type="entry name" value="IF2_N"/>
    <property type="match status" value="2"/>
</dbReference>
<dbReference type="SUPFAM" id="SSF52156">
    <property type="entry name" value="Initiation factor IF2/eIF5b, domain 3"/>
    <property type="match status" value="1"/>
</dbReference>
<dbReference type="SUPFAM" id="SSF52540">
    <property type="entry name" value="P-loop containing nucleoside triphosphate hydrolases"/>
    <property type="match status" value="1"/>
</dbReference>
<dbReference type="SUPFAM" id="SSF46955">
    <property type="entry name" value="Putative DNA-binding domain"/>
    <property type="match status" value="1"/>
</dbReference>
<dbReference type="SUPFAM" id="SSF50447">
    <property type="entry name" value="Translation proteins"/>
    <property type="match status" value="2"/>
</dbReference>
<dbReference type="PROSITE" id="PS51722">
    <property type="entry name" value="G_TR_2"/>
    <property type="match status" value="1"/>
</dbReference>
<dbReference type="PROSITE" id="PS01176">
    <property type="entry name" value="IF2"/>
    <property type="match status" value="1"/>
</dbReference>
<feature type="chain" id="PRO_1000008333" description="Translation initiation factor IF-2">
    <location>
        <begin position="1"/>
        <end position="880"/>
    </location>
</feature>
<feature type="domain" description="tr-type G">
    <location>
        <begin position="380"/>
        <end position="549"/>
    </location>
</feature>
<feature type="region of interest" description="Disordered" evidence="3">
    <location>
        <begin position="143"/>
        <end position="289"/>
    </location>
</feature>
<feature type="region of interest" description="G1" evidence="1">
    <location>
        <begin position="389"/>
        <end position="396"/>
    </location>
</feature>
<feature type="region of interest" description="G2" evidence="1">
    <location>
        <begin position="414"/>
        <end position="418"/>
    </location>
</feature>
<feature type="region of interest" description="G3" evidence="1">
    <location>
        <begin position="435"/>
        <end position="438"/>
    </location>
</feature>
<feature type="region of interest" description="G4" evidence="1">
    <location>
        <begin position="489"/>
        <end position="492"/>
    </location>
</feature>
<feature type="region of interest" description="G5" evidence="1">
    <location>
        <begin position="525"/>
        <end position="527"/>
    </location>
</feature>
<feature type="compositionally biased region" description="Basic and acidic residues" evidence="3">
    <location>
        <begin position="143"/>
        <end position="228"/>
    </location>
</feature>
<feature type="compositionally biased region" description="Basic residues" evidence="3">
    <location>
        <begin position="249"/>
        <end position="262"/>
    </location>
</feature>
<feature type="binding site" evidence="2">
    <location>
        <begin position="389"/>
        <end position="396"/>
    </location>
    <ligand>
        <name>GTP</name>
        <dbReference type="ChEBI" id="CHEBI:37565"/>
    </ligand>
</feature>
<feature type="binding site" evidence="2">
    <location>
        <begin position="435"/>
        <end position="439"/>
    </location>
    <ligand>
        <name>GTP</name>
        <dbReference type="ChEBI" id="CHEBI:37565"/>
    </ligand>
</feature>
<feature type="binding site" evidence="2">
    <location>
        <begin position="489"/>
        <end position="492"/>
    </location>
    <ligand>
        <name>GTP</name>
        <dbReference type="ChEBI" id="CHEBI:37565"/>
    </ligand>
</feature>
<sequence length="880" mass="95516">MADTTVEKLATEVGKSVERLIEQFSQAGIKKGQADNVSEAEKQQLLDYLKKQHGADSAPTKMTLQRKTVSTLSVAGNGGQSKDVKVEVRKTRTFVKRDVNDTVLKAEEEAKAEAEALAKAKAEAEAAQAAKAKAEAEAKAKAEAEAKAKAKAAAEVKVTKESSPEVEAARLEAERLKAAQEAATKRKQDEEAAKAAEKARLLAEENSKRWAEEERQRLEAERNGDHHITTSKVARAAEDTSDLDEEKRGRRARNKSNAKKRGGKDARDGREKHMRNRSTAPESMAHGFNKPVAAVSRDVRIGETVTVSELAHLMAVKATEIIKQMMKMGSMVTINQVLDQETAQLVAEEMGHKVVLIRENELEHQVLQDRDDEDGIKLESRAPVVTIMGHVDHGKTSLLDYIRRAKVAAGEAGGITQHIGAYHVETENGMITFLDTPGHAAFTAMRARGAKATDIVVLVVAADDGVMPQTIEAIQHAKAGNVPLIVAVNKMDKPEADIDRVKSELSQHGVMSEDWGGDNMFAFVSAKTGEGVDDLLEGILLQAEVLELKAVRDGMAAGVVIESQLDKGRGPVATILVQEGTLRQGDIVLCGLEYGKIRAMKDENGRSITEAGPSIPVEILGLSGVPSAGDEATVVRDERKAREVALYRQGKFRDVKLARQQKSKLENMFANMTDGEVKELNIVLKADVQGSLEAITDSLTGLSTDEVKVNIIARGVGALTETDATLAAASNAIMVGFNVRADAQARKVIESESVDLRYYSVIYNLIDEVKAAMTGMLSPEFKQQIIGLAEVRDVFKSPKLGAIAGCMVTEGTIKRSAPIRVLRDNVVIFEGELESLRRFKDDVAEVRNGMECGIGVKNYNDVRVGDQIEVFETVEVARTL</sequence>
<comment type="function">
    <text evidence="2">One of the essential components for the initiation of protein synthesis. Protects formylmethionyl-tRNA from spontaneous hydrolysis and promotes its binding to the 30S ribosomal subunits. Also involved in the hydrolysis of GTP during the formation of the 70S ribosomal complex.</text>
</comment>
<comment type="subcellular location">
    <subcellularLocation>
        <location evidence="2">Cytoplasm</location>
    </subcellularLocation>
</comment>
<comment type="similarity">
    <text evidence="2">Belongs to the TRAFAC class translation factor GTPase superfamily. Classic translation factor GTPase family. IF-2 subfamily.</text>
</comment>
<keyword id="KW-0963">Cytoplasm</keyword>
<keyword id="KW-0342">GTP-binding</keyword>
<keyword id="KW-0396">Initiation factor</keyword>
<keyword id="KW-0547">Nucleotide-binding</keyword>
<keyword id="KW-0648">Protein biosynthesis</keyword>
<gene>
    <name evidence="2" type="primary">infB</name>
    <name type="ordered locus">Sputcn32_2834</name>
</gene>
<proteinExistence type="inferred from homology"/>
<reference key="1">
    <citation type="submission" date="2007-04" db="EMBL/GenBank/DDBJ databases">
        <title>Complete sequence of Shewanella putrefaciens CN-32.</title>
        <authorList>
            <consortium name="US DOE Joint Genome Institute"/>
            <person name="Copeland A."/>
            <person name="Lucas S."/>
            <person name="Lapidus A."/>
            <person name="Barry K."/>
            <person name="Detter J.C."/>
            <person name="Glavina del Rio T."/>
            <person name="Hammon N."/>
            <person name="Israni S."/>
            <person name="Dalin E."/>
            <person name="Tice H."/>
            <person name="Pitluck S."/>
            <person name="Chain P."/>
            <person name="Malfatti S."/>
            <person name="Shin M."/>
            <person name="Vergez L."/>
            <person name="Schmutz J."/>
            <person name="Larimer F."/>
            <person name="Land M."/>
            <person name="Hauser L."/>
            <person name="Kyrpides N."/>
            <person name="Mikhailova N."/>
            <person name="Romine M.F."/>
            <person name="Fredrickson J."/>
            <person name="Tiedje J."/>
            <person name="Richardson P."/>
        </authorList>
    </citation>
    <scope>NUCLEOTIDE SEQUENCE [LARGE SCALE GENOMIC DNA]</scope>
    <source>
        <strain>CN-32 / ATCC BAA-453</strain>
    </source>
</reference>
<evidence type="ECO:0000250" key="1"/>
<evidence type="ECO:0000255" key="2">
    <source>
        <dbReference type="HAMAP-Rule" id="MF_00100"/>
    </source>
</evidence>
<evidence type="ECO:0000256" key="3">
    <source>
        <dbReference type="SAM" id="MobiDB-lite"/>
    </source>
</evidence>